<evidence type="ECO:0000250" key="1">
    <source>
        <dbReference type="UniProtKB" id="P12537"/>
    </source>
</evidence>
<evidence type="ECO:0000255" key="2">
    <source>
        <dbReference type="HAMAP-Rule" id="MF_04047"/>
    </source>
</evidence>
<evidence type="ECO:0000256" key="3">
    <source>
        <dbReference type="SAM" id="MobiDB-lite"/>
    </source>
</evidence>
<evidence type="ECO:0000269" key="4">
    <source>
    </source>
</evidence>
<evidence type="ECO:0000269" key="5">
    <source>
    </source>
</evidence>
<evidence type="ECO:0000305" key="6"/>
<sequence length="585" mass="65287">MMQDATDPAVRAALQSQPSGLNSTDDWRQVMDRIMSLTARNPDAFRQQPQANRLSAILEAVVPARANPTHEKVLAIVNALAENRAIRPDEAGLVYDALLQRVARYNSGNVQTNLDRLVGDVREAVAQRERAQQQGNLGSMVALNAFLSTQPANVPRGQEDYTNFVSALRLMVTETPQSEVYQSGPDYFFQTSRQGLQTVNLSQAFKNLQGLWGVRAPTGDRATVSSLLTPNSRLLLLLIAPFTDSGSVSRDTYLGHLLTLYREAIGQAHVDEHTFQEITSVSRALGQEDTGSLEATLNYLLTNRRQKIPSLHSLNSEEERILRYVQQSVSLNLMRDGVTPSVALDMTARNMEPGMYASNRPFINRLMDYLHRAAAVNPEYFTNAILNPHWLPPPGFYTGGFEVPEGNDGFLWDDIDDSVFSPQPQTLLELQQREQAEAALRKESFRRPSSLSDLGAAAPRSDASSPFPSLIGSFTSTRTTRPRLLGEEEYLNNSLLQPQREKNLPPAFPNNGIESLVDKMSRWKTYAQEHRDVPGPRPPTRRQRHDRQRGLVWEDDDSADDSSVLDLGGSGNPFAHLRPRLGRMF</sequence>
<proteinExistence type="evidence at protein level"/>
<protein>
    <recommendedName>
        <fullName evidence="2">Pre-hexon-linking protein IIIa</fullName>
    </recommendedName>
    <alternativeName>
        <fullName evidence="2">Capsid vertex-specific component IIIa</fullName>
        <shortName evidence="2">CVSC</shortName>
    </alternativeName>
    <alternativeName>
        <fullName evidence="2">Protein IIIa</fullName>
    </alternativeName>
    <alternativeName>
        <fullName evidence="2">pIIIa</fullName>
    </alternativeName>
    <component>
        <recommendedName>
            <fullName evidence="2">Hexon-linking protein IIIa</fullName>
        </recommendedName>
    </component>
</protein>
<dbReference type="EMBL" id="J01917">
    <property type="protein sequence ID" value="AAA92210.1"/>
    <property type="molecule type" value="Genomic_DNA"/>
</dbReference>
<dbReference type="PIR" id="A03851">
    <property type="entry name" value="SXAD32"/>
</dbReference>
<dbReference type="RefSeq" id="AP_000169.1">
    <property type="nucleotide sequence ID" value="AC_000007.1"/>
</dbReference>
<dbReference type="RefSeq" id="NP_040520.1">
    <property type="nucleotide sequence ID" value="NC_001405.1"/>
</dbReference>
<dbReference type="SMR" id="P03279"/>
<dbReference type="iPTMnet" id="P03279"/>
<dbReference type="GeneID" id="2652993"/>
<dbReference type="KEGG" id="vg:2652993"/>
<dbReference type="Proteomes" id="UP000008167">
    <property type="component" value="Segment"/>
</dbReference>
<dbReference type="GO" id="GO:0042025">
    <property type="term" value="C:host cell nucleus"/>
    <property type="evidence" value="ECO:0007669"/>
    <property type="project" value="UniProtKB-SubCell"/>
</dbReference>
<dbReference type="GO" id="GO:0098021">
    <property type="term" value="C:viral capsid, decoration"/>
    <property type="evidence" value="ECO:0007669"/>
    <property type="project" value="UniProtKB-UniRule"/>
</dbReference>
<dbReference type="Gene3D" id="1.20.120.1500">
    <property type="entry name" value="Pre-hexon-linking protein IIIa"/>
    <property type="match status" value="1"/>
</dbReference>
<dbReference type="HAMAP" id="MF_04047">
    <property type="entry name" value="ADV_CAP3"/>
    <property type="match status" value="1"/>
</dbReference>
<dbReference type="InterPro" id="IPR003479">
    <property type="entry name" value="Hex_IIIa"/>
</dbReference>
<dbReference type="InterPro" id="IPR043053">
    <property type="entry name" value="Hex_IIIa_N"/>
</dbReference>
<dbReference type="Pfam" id="PF02455">
    <property type="entry name" value="Hex_IIIa"/>
    <property type="match status" value="1"/>
</dbReference>
<reference key="1">
    <citation type="journal article" date="1984" name="J. Biol. Chem.">
        <title>DNA sequences from the adenovirus 2 genome.</title>
        <authorList>
            <person name="Roberts R.J."/>
            <person name="O'Neill K.E."/>
            <person name="Yen C.E."/>
        </authorList>
    </citation>
    <scope>NUCLEOTIDE SEQUENCE [GENOMIC DNA]</scope>
</reference>
<reference key="2">
    <citation type="journal article" date="2012" name="Virology">
        <title>The phosphoproteome of the adenovirus type 2 virion.</title>
        <authorList>
            <person name="Bergstrom Lind S."/>
            <person name="Artemenko K.A."/>
            <person name="Elfineh L."/>
            <person name="Zhao Y."/>
            <person name="Bergquist J."/>
            <person name="Pettersson U."/>
        </authorList>
    </citation>
    <scope>PROTEIN SEQUENCE OF 222-233; 263-283; 308-320; 442-478; 484-500 AND 503-519</scope>
    <scope>PHOSPHORYLATION AT SER-225; THR-274; SER-310; SER-444; SER-449; SER-450; SER-452; SER-469; SER-473; TYR-490; SER-494 AND SER-515</scope>
</reference>
<reference key="3">
    <citation type="journal article" date="1989" name="J. Gen. Virol.">
        <title>Characterization of the adenovirus proteinase: substrate specificity.</title>
        <authorList>
            <person name="Webster A."/>
            <person name="Russell S."/>
            <person name="Talbot P."/>
            <person name="Russell W.C."/>
            <person name="Kemp G.D."/>
        </authorList>
    </citation>
    <scope>PROTEOLYTIC CLEAVAGE BY THE VIRAL PROTEASE</scope>
</reference>
<reference key="4">
    <citation type="journal article" date="2012" name="Viruses">
        <title>Latest insights on adenovirus structure and assembly.</title>
        <authorList>
            <person name="San Martin C."/>
        </authorList>
    </citation>
    <scope>REVIEW</scope>
</reference>
<name>CAP3_ADE02</name>
<accession>P03279</accession>
<organism>
    <name type="scientific">Human adenovirus C serotype 2</name>
    <name type="common">HAdV-2</name>
    <name type="synonym">Human adenovirus 2</name>
    <dbReference type="NCBI Taxonomy" id="10515"/>
    <lineage>
        <taxon>Viruses</taxon>
        <taxon>Varidnaviria</taxon>
        <taxon>Bamfordvirae</taxon>
        <taxon>Preplasmiviricota</taxon>
        <taxon>Tectiliviricetes</taxon>
        <taxon>Rowavirales</taxon>
        <taxon>Adenoviridae</taxon>
        <taxon>Mastadenovirus</taxon>
        <taxon>Human mastadenovirus C</taxon>
    </lineage>
</organism>
<keyword id="KW-1232">Capsid decoration protein</keyword>
<keyword id="KW-0167">Capsid protein</keyword>
<keyword id="KW-0903">Direct protein sequencing</keyword>
<keyword id="KW-1048">Host nucleus</keyword>
<keyword id="KW-0426">Late protein</keyword>
<keyword id="KW-0597">Phosphoprotein</keyword>
<keyword id="KW-1185">Reference proteome</keyword>
<keyword id="KW-0231">Viral genome packaging</keyword>
<keyword id="KW-1188">Viral release from host cell</keyword>
<keyword id="KW-0946">Virion</keyword>
<comment type="function">
    <text evidence="2">Structural component of the virion that acts as a cement protein on the capsid exterior which mediates the interactions between the hexons, including the peripentonal hexons, and reaches all the way to the penton vertices. Two hexon linking proteins IIIa, one from each facet, stabilize the unique edge interface between a pair of facets. As the virus enters the host cell, hexon linking proteins IIIa are shed concomitant with virion acidification in the endosome. During virus assembly, seems to play a role in the serotype specificity of the packaging of viral DNA via its interaction with packaging protein 3.</text>
</comment>
<comment type="subunit">
    <text evidence="1 2">Interacts with hexon proteins; this interaction tethers the peripentonal hexons to hexons situated in the facet. Interacts with the penton protein (via N-terminus). Interacts with packaging protein 3; this interaction is required to promote correct genome packaging.</text>
</comment>
<comment type="subcellular location">
    <subcellularLocation>
        <location evidence="2">Virion</location>
    </subcellularLocation>
    <subcellularLocation>
        <location evidence="2">Host nucleus</location>
    </subcellularLocation>
    <text evidence="2">Surrounds the border of each facet on the capsid exterior. Present in around 60 copies per virion.</text>
</comment>
<comment type="induction">
    <text evidence="2">Expressed in the late phase of the viral replicative cycle.</text>
</comment>
<comment type="PTM">
    <text evidence="2 5">Cleaved near the C-terminus by the viral protease during virion maturation to form the mature protein.</text>
</comment>
<comment type="miscellaneous">
    <text evidence="2">All late proteins expressed from the major late promoter are produced by alternative splicing and alternative polyadenylation of the same gene giving rise to non-overlapping ORFs. A leader sequence is present in the N-terminus of all these mRNAs and is recognized by the viral shutoff protein to provide expression although conventional translation via ribosome scanning from the cap has been shut off in the host cell.</text>
</comment>
<comment type="similarity">
    <text evidence="2 6">Belongs to the adenoviridae hexon-linking protein IIIa family.</text>
</comment>
<feature type="chain" id="PRO_0000421073" description="Pre-hexon-linking protein IIIa" evidence="2">
    <location>
        <begin position="1"/>
        <end position="585"/>
    </location>
</feature>
<feature type="chain" id="PRO_0000221834" description="Hexon-linking protein IIIa" evidence="2">
    <location>
        <begin position="1"/>
        <end position="570"/>
    </location>
</feature>
<feature type="propeptide" id="PRO_0000421074" evidence="2 5">
    <location>
        <begin position="571"/>
        <end position="585"/>
    </location>
</feature>
<feature type="region of interest" description="Peripentonal hexon-tethering domain" evidence="2">
    <location>
        <begin position="1"/>
        <end position="106"/>
    </location>
</feature>
<feature type="region of interest" description="Disordered" evidence="3">
    <location>
        <begin position="1"/>
        <end position="24"/>
    </location>
</feature>
<feature type="region of interest" description="Binding to hexon-linking protein" evidence="2">
    <location>
        <begin position="138"/>
        <end position="251"/>
    </location>
</feature>
<feature type="region of interest" description="Disordered" evidence="3">
    <location>
        <begin position="438"/>
        <end position="475"/>
    </location>
</feature>
<feature type="region of interest" description="Disordered" evidence="3">
    <location>
        <begin position="528"/>
        <end position="573"/>
    </location>
</feature>
<feature type="compositionally biased region" description="Polar residues" evidence="3">
    <location>
        <begin position="14"/>
        <end position="24"/>
    </location>
</feature>
<feature type="compositionally biased region" description="Polar residues" evidence="3">
    <location>
        <begin position="462"/>
        <end position="475"/>
    </location>
</feature>
<feature type="site" description="Cleavage; by viral protease" evidence="2 5">
    <location>
        <begin position="570"/>
        <end position="571"/>
    </location>
</feature>
<feature type="modified residue" description="Phosphoserine; by host" evidence="2 4">
    <location>
        <position position="225"/>
    </location>
</feature>
<feature type="modified residue" description="Phosphothreonine; by host" evidence="2 4">
    <location>
        <position position="274"/>
    </location>
</feature>
<feature type="modified residue" description="Phosphoserine; by host" evidence="2 4">
    <location>
        <position position="310"/>
    </location>
</feature>
<feature type="modified residue" description="Phosphoserine; by host" evidence="2 4">
    <location>
        <position position="444"/>
    </location>
</feature>
<feature type="modified residue" description="Phosphoserine; by host" evidence="2 4">
    <location>
        <position position="449"/>
    </location>
</feature>
<feature type="modified residue" description="Phosphoserine; by host" evidence="2 4">
    <location>
        <position position="450"/>
    </location>
</feature>
<feature type="modified residue" description="Phosphoserine; by host" evidence="2 4">
    <location>
        <position position="452"/>
    </location>
</feature>
<feature type="modified residue" description="Phosphoserine; by host" evidence="2 4">
    <location>
        <position position="469"/>
    </location>
</feature>
<feature type="modified residue" description="Phosphoserine; by host" evidence="2 4">
    <location>
        <position position="473"/>
    </location>
</feature>
<feature type="modified residue" description="Phosphotyrosine; by host" evidence="2 4">
    <location>
        <position position="490"/>
    </location>
</feature>
<feature type="modified residue" description="Phosphoserine; by host" evidence="2 4">
    <location>
        <position position="494"/>
    </location>
</feature>
<feature type="modified residue" description="Phosphoserine; by host" evidence="2 4">
    <location>
        <position position="515"/>
    </location>
</feature>
<organismHost>
    <name type="scientific">Homo sapiens</name>
    <name type="common">Human</name>
    <dbReference type="NCBI Taxonomy" id="9606"/>
</organismHost>
<gene>
    <name type="ORF">L1</name>
</gene>